<name>ISDH_STAAS</name>
<keyword id="KW-0002">3D-structure</keyword>
<keyword id="KW-0134">Cell wall</keyword>
<keyword id="KW-0572">Peptidoglycan-anchor</keyword>
<keyword id="KW-0677">Repeat</keyword>
<keyword id="KW-0964">Secreted</keyword>
<keyword id="KW-0732">Signal</keyword>
<reference key="1">
    <citation type="journal article" date="2004" name="Proc. Natl. Acad. Sci. U.S.A.">
        <title>Complete genomes of two clinical Staphylococcus aureus strains: evidence for the rapid evolution of virulence and drug resistance.</title>
        <authorList>
            <person name="Holden M.T.G."/>
            <person name="Feil E.J."/>
            <person name="Lindsay J.A."/>
            <person name="Peacock S.J."/>
            <person name="Day N.P.J."/>
            <person name="Enright M.C."/>
            <person name="Foster T.J."/>
            <person name="Moore C.E."/>
            <person name="Hurst L."/>
            <person name="Atkin R."/>
            <person name="Barron A."/>
            <person name="Bason N."/>
            <person name="Bentley S.D."/>
            <person name="Chillingworth C."/>
            <person name="Chillingworth T."/>
            <person name="Churcher C."/>
            <person name="Clark L."/>
            <person name="Corton C."/>
            <person name="Cronin A."/>
            <person name="Doggett J."/>
            <person name="Dowd L."/>
            <person name="Feltwell T."/>
            <person name="Hance Z."/>
            <person name="Harris B."/>
            <person name="Hauser H."/>
            <person name="Holroyd S."/>
            <person name="Jagels K."/>
            <person name="James K.D."/>
            <person name="Lennard N."/>
            <person name="Line A."/>
            <person name="Mayes R."/>
            <person name="Moule S."/>
            <person name="Mungall K."/>
            <person name="Ormond D."/>
            <person name="Quail M.A."/>
            <person name="Rabbinowitsch E."/>
            <person name="Rutherford K.M."/>
            <person name="Sanders M."/>
            <person name="Sharp S."/>
            <person name="Simmonds M."/>
            <person name="Stevens K."/>
            <person name="Whitehead S."/>
            <person name="Barrell B.G."/>
            <person name="Spratt B.G."/>
            <person name="Parkhill J."/>
        </authorList>
    </citation>
    <scope>NUCLEOTIDE SEQUENCE [LARGE SCALE GENOMIC DNA]</scope>
    <source>
        <strain>MSSA476</strain>
    </source>
</reference>
<reference key="2">
    <citation type="journal article" date="2006" name="J. Mol. Biol.">
        <title>Solution structure of the NEAT (NEAr Transporter) domain from IsdH/HarA: the human hemoglobin receptor in Staphylococcus aureus.</title>
        <authorList>
            <person name="Pilpa R.M."/>
            <person name="Fadeev E.A."/>
            <person name="Villareal V.A."/>
            <person name="Wong M.L."/>
            <person name="Phillips M."/>
            <person name="Clubb R.T."/>
        </authorList>
    </citation>
    <scope>STRUCTURE BY NMR OF 86-229</scope>
    <scope>BINDING TO HEMOGLOBIN</scope>
</reference>
<gene>
    <name type="primary">isdH</name>
    <name type="synonym">harA</name>
    <name type="synonym">sasI</name>
    <name type="ordered locus">SAS1657</name>
</gene>
<sequence length="895" mass="100847">MNKHHPKLRSFYSIRKSILGVASVIVSTLFLITSQHQAQAAENTNTSDKISENQNNNATTTQPPKDTNQTQPATQPANTAKTYPAADESLKDAIKDPALENKEHDIGPREQVNFQLLDKNNETQYYHFFSIKDPADVYYTKKKAEVELDINTASTWKKFEVYENNQKLPVRLVSYSPVPEDHAYIRFPVSDGTQELKIVSSTQIDDGEETNYDYTKLVFAKPIYNDPSLVKSDTNDAVVTNDQSSSDASNQTNTNTSNQNTSTINNANNQPQATTNMSQPAQPKSSANADQASSQPAHETNSNGNTNDKTNESSNQSDVNQQYPPADESLQDAIKNPAIIDKEHTADNWRPIDFQMKNDKGERQFYHYASTVEPATVIFTKTGPIIELGLKTASTWKKFEVYEGDKKLPVELVSYDSDKDYAYIRFPVSNGTREVKIVSSIEYGENIHEDYDYTLMVFAQPITNNPDDYVDEETYNLQKLLAPYHKAKTLERQVYELEKLQEKLPEKYKAEYKKKLDQTRVELADQVKSAVTEFENVTPTNDQLTDVQEAHFVVFESEENSESVMDGFVEHPFYTATLNGQKYVVMKTKDDSYWKDLIVEGKRVTTVSKDPKNNSRTLIFPYIPDKAVYNAIVKVVVANIGYEGQYHVRIINQDINTKDDDTSQNNTSEPLNVQTGQEGKVADTDVAENSSTATNPKDASDKADVIEPDSDVVKDADNNIDKDVQHDVDHLSDMSDNNHFDKYDLKEMDTQIAKDTDRNVDKGADNSVGMSSNVDTDKDSNKNKDKVIQLNHIADKNNHNGKAAKLDVVKQNYNNTDKVTDKKTTEHLPSDIHKTVDKTVKTKEKAGTPSKENKLSQSKMLPKTGETTSSQSWWGLYALLGMLALFIPKFRKESK</sequence>
<organism>
    <name type="scientific">Staphylococcus aureus (strain MSSA476)</name>
    <dbReference type="NCBI Taxonomy" id="282459"/>
    <lineage>
        <taxon>Bacteria</taxon>
        <taxon>Bacillati</taxon>
        <taxon>Bacillota</taxon>
        <taxon>Bacilli</taxon>
        <taxon>Bacillales</taxon>
        <taxon>Staphylococcaceae</taxon>
        <taxon>Staphylococcus</taxon>
    </lineage>
</organism>
<comment type="function">
    <text evidence="6">Binds human plasma haptoglobin-hemoglobin complexes, haptoglobin and hemoglobin. Binds haptoglobin-hemoglobin complexes with significantly higher affinity than haptoglobin alone (Probable).</text>
</comment>
<comment type="subcellular location">
    <subcellularLocation>
        <location evidence="6">Secreted</location>
        <location evidence="6">Cell wall</location>
        <topology evidence="6">Peptidoglycan-anchor</topology>
    </subcellularLocation>
</comment>
<comment type="domain">
    <text evidence="1">The NEAT 1 domain binds with higher affinity than the NEAT 2 domain haptoglobin-hemoglobin complexes, haptoglobin and hemoglobin (By similarity). More than one IsdH NEAT 1 domain interacts with a single hemoglobin.</text>
</comment>
<comment type="similarity">
    <text evidence="6">Belongs to the IsdH family.</text>
</comment>
<evidence type="ECO:0000250" key="1"/>
<evidence type="ECO:0000255" key="2"/>
<evidence type="ECO:0000255" key="3">
    <source>
        <dbReference type="PROSITE-ProRule" id="PRU00337"/>
    </source>
</evidence>
<evidence type="ECO:0000255" key="4">
    <source>
        <dbReference type="PROSITE-ProRule" id="PRU00477"/>
    </source>
</evidence>
<evidence type="ECO:0000256" key="5">
    <source>
        <dbReference type="SAM" id="MobiDB-lite"/>
    </source>
</evidence>
<evidence type="ECO:0000305" key="6"/>
<evidence type="ECO:0007829" key="7">
    <source>
        <dbReference type="PDB" id="2H3K"/>
    </source>
</evidence>
<evidence type="ECO:0007829" key="8">
    <source>
        <dbReference type="PDB" id="3OVU"/>
    </source>
</evidence>
<evidence type="ECO:0007829" key="9">
    <source>
        <dbReference type="PDB" id="3S48"/>
    </source>
</evidence>
<accession>Q6G8J7</accession>
<dbReference type="EMBL" id="BX571857">
    <property type="protein sequence ID" value="CAG43459.1"/>
    <property type="molecule type" value="Genomic_DNA"/>
</dbReference>
<dbReference type="RefSeq" id="WP_001032759.1">
    <property type="nucleotide sequence ID" value="NC_002953.3"/>
</dbReference>
<dbReference type="PDB" id="2H3K">
    <property type="method" value="NMR"/>
    <property type="chains" value="A=86-229"/>
</dbReference>
<dbReference type="PDB" id="3OVU">
    <property type="method" value="X-ray"/>
    <property type="resolution" value="2.83 A"/>
    <property type="chains" value="B=86-229"/>
</dbReference>
<dbReference type="PDB" id="3S48">
    <property type="method" value="X-ray"/>
    <property type="resolution" value="3.05 A"/>
    <property type="chains" value="A/B=86-229"/>
</dbReference>
<dbReference type="PDBsum" id="2H3K"/>
<dbReference type="PDBsum" id="3OVU"/>
<dbReference type="PDBsum" id="3S48"/>
<dbReference type="BMRB" id="Q6G8J7"/>
<dbReference type="SMR" id="Q6G8J7"/>
<dbReference type="KEGG" id="sas:SAS1657"/>
<dbReference type="HOGENOM" id="CLU_016167_1_0_9"/>
<dbReference type="EvolutionaryTrace" id="Q6G8J7"/>
<dbReference type="GO" id="GO:0005576">
    <property type="term" value="C:extracellular region"/>
    <property type="evidence" value="ECO:0007669"/>
    <property type="project" value="UniProtKB-KW"/>
</dbReference>
<dbReference type="GO" id="GO:0020037">
    <property type="term" value="F:heme binding"/>
    <property type="evidence" value="ECO:0007669"/>
    <property type="project" value="InterPro"/>
</dbReference>
<dbReference type="CDD" id="cd06920">
    <property type="entry name" value="NEAT"/>
    <property type="match status" value="1"/>
</dbReference>
<dbReference type="Gene3D" id="1.20.58.1270">
    <property type="match status" value="1"/>
</dbReference>
<dbReference type="Gene3D" id="2.60.40.1850">
    <property type="match status" value="3"/>
</dbReference>
<dbReference type="InterPro" id="IPR048652">
    <property type="entry name" value="Isd_H_B_linker"/>
</dbReference>
<dbReference type="InterPro" id="IPR050436">
    <property type="entry name" value="IsdA"/>
</dbReference>
<dbReference type="InterPro" id="IPR019930">
    <property type="entry name" value="IsdH"/>
</dbReference>
<dbReference type="InterPro" id="IPR019931">
    <property type="entry name" value="LPXTG_anchor"/>
</dbReference>
<dbReference type="InterPro" id="IPR006635">
    <property type="entry name" value="NEAT_dom"/>
</dbReference>
<dbReference type="InterPro" id="IPR037250">
    <property type="entry name" value="NEAT_dom_sf"/>
</dbReference>
<dbReference type="InterPro" id="IPR005877">
    <property type="entry name" value="YSIRK_signal_dom"/>
</dbReference>
<dbReference type="NCBIfam" id="TIGR03658">
    <property type="entry name" value="IsdH_HarA"/>
    <property type="match status" value="1"/>
</dbReference>
<dbReference type="NCBIfam" id="TIGR01167">
    <property type="entry name" value="LPXTG_anchor"/>
    <property type="match status" value="1"/>
</dbReference>
<dbReference type="NCBIfam" id="TIGR01168">
    <property type="entry name" value="YSIRK_signal"/>
    <property type="match status" value="1"/>
</dbReference>
<dbReference type="PANTHER" id="PTHR37824">
    <property type="entry name" value="IRON-REGULATED SURFACE DETERMINANT PROTEIN C"/>
    <property type="match status" value="1"/>
</dbReference>
<dbReference type="PANTHER" id="PTHR37824:SF1">
    <property type="entry name" value="IRON-REGULATED SURFACE DETERMINANT PROTEIN C"/>
    <property type="match status" value="1"/>
</dbReference>
<dbReference type="Pfam" id="PF20861">
    <property type="entry name" value="Isd_H_B_linker"/>
    <property type="match status" value="1"/>
</dbReference>
<dbReference type="Pfam" id="PF05031">
    <property type="entry name" value="NEAT"/>
    <property type="match status" value="3"/>
</dbReference>
<dbReference type="Pfam" id="PF04650">
    <property type="entry name" value="YSIRK_signal"/>
    <property type="match status" value="1"/>
</dbReference>
<dbReference type="SMART" id="SM00725">
    <property type="entry name" value="NEAT"/>
    <property type="match status" value="3"/>
</dbReference>
<dbReference type="SUPFAM" id="SSF158911">
    <property type="entry name" value="NEAT domain-like"/>
    <property type="match status" value="3"/>
</dbReference>
<dbReference type="PROSITE" id="PS50847">
    <property type="entry name" value="GRAM_POS_ANCHORING"/>
    <property type="match status" value="1"/>
</dbReference>
<dbReference type="PROSITE" id="PS50978">
    <property type="entry name" value="NEAT"/>
    <property type="match status" value="3"/>
</dbReference>
<protein>
    <recommendedName>
        <fullName>Iron-regulated surface determinant protein H</fullName>
    </recommendedName>
    <alternativeName>
        <fullName>Haptoglobin receptor A</fullName>
    </alternativeName>
    <alternativeName>
        <fullName>Staphylococcus aureus surface protein I</fullName>
    </alternativeName>
</protein>
<feature type="signal peptide" evidence="2">
    <location>
        <begin position="1"/>
        <end position="40"/>
    </location>
</feature>
<feature type="chain" id="PRO_0000285185" description="Iron-regulated surface determinant protein H">
    <location>
        <begin position="41"/>
        <end position="864"/>
    </location>
</feature>
<feature type="propeptide" id="PRO_0000285186" description="Removed by sortase" evidence="4">
    <location>
        <begin position="865"/>
        <end position="895"/>
    </location>
</feature>
<feature type="domain" description="NEAT 1" evidence="3">
    <location>
        <begin position="105"/>
        <end position="232"/>
    </location>
</feature>
<feature type="domain" description="NEAT 2" evidence="3">
    <location>
        <begin position="345"/>
        <end position="471"/>
    </location>
</feature>
<feature type="domain" description="NEAT 3" evidence="3">
    <location>
        <begin position="543"/>
        <end position="660"/>
    </location>
</feature>
<feature type="region of interest" description="Disordered" evidence="5">
    <location>
        <begin position="42"/>
        <end position="84"/>
    </location>
</feature>
<feature type="region of interest" description="Disordered" evidence="5">
    <location>
        <begin position="239"/>
        <end position="324"/>
    </location>
</feature>
<feature type="region of interest" description="Disordered" evidence="5">
    <location>
        <begin position="657"/>
        <end position="705"/>
    </location>
</feature>
<feature type="region of interest" description="Disordered" evidence="5">
    <location>
        <begin position="752"/>
        <end position="782"/>
    </location>
</feature>
<feature type="region of interest" description="Disordered" evidence="5">
    <location>
        <begin position="841"/>
        <end position="868"/>
    </location>
</feature>
<feature type="short sequence motif" description="LPXTG sorting signal" evidence="4">
    <location>
        <begin position="861"/>
        <end position="865"/>
    </location>
</feature>
<feature type="compositionally biased region" description="Low complexity" evidence="5">
    <location>
        <begin position="53"/>
        <end position="62"/>
    </location>
</feature>
<feature type="compositionally biased region" description="Polar residues" evidence="5">
    <location>
        <begin position="63"/>
        <end position="81"/>
    </location>
</feature>
<feature type="compositionally biased region" description="Low complexity" evidence="5">
    <location>
        <begin position="240"/>
        <end position="276"/>
    </location>
</feature>
<feature type="compositionally biased region" description="Polar residues" evidence="5">
    <location>
        <begin position="277"/>
        <end position="323"/>
    </location>
</feature>
<feature type="compositionally biased region" description="Polar residues" evidence="5">
    <location>
        <begin position="663"/>
        <end position="677"/>
    </location>
</feature>
<feature type="compositionally biased region" description="Polar residues" evidence="5">
    <location>
        <begin position="687"/>
        <end position="697"/>
    </location>
</feature>
<feature type="compositionally biased region" description="Basic and acidic residues" evidence="5">
    <location>
        <begin position="752"/>
        <end position="764"/>
    </location>
</feature>
<feature type="compositionally biased region" description="Basic and acidic residues" evidence="5">
    <location>
        <begin position="841"/>
        <end position="854"/>
    </location>
</feature>
<feature type="compositionally biased region" description="Polar residues" evidence="5">
    <location>
        <begin position="855"/>
        <end position="868"/>
    </location>
</feature>
<feature type="modified residue" description="Pentaglycyl murein peptidoglycan amidated threonine" evidence="4">
    <location>
        <position position="864"/>
    </location>
</feature>
<feature type="turn" evidence="8">
    <location>
        <begin position="86"/>
        <end position="88"/>
    </location>
</feature>
<feature type="helix" evidence="8">
    <location>
        <begin position="90"/>
        <end position="93"/>
    </location>
</feature>
<feature type="helix" evidence="8">
    <location>
        <begin position="97"/>
        <end position="99"/>
    </location>
</feature>
<feature type="strand" evidence="9">
    <location>
        <begin position="109"/>
        <end position="112"/>
    </location>
</feature>
<feature type="strand" evidence="8">
    <location>
        <begin position="114"/>
        <end position="117"/>
    </location>
</feature>
<feature type="strand" evidence="9">
    <location>
        <begin position="121"/>
        <end position="123"/>
    </location>
</feature>
<feature type="helix" evidence="8">
    <location>
        <begin position="125"/>
        <end position="130"/>
    </location>
</feature>
<feature type="strand" evidence="8">
    <location>
        <begin position="133"/>
        <end position="138"/>
    </location>
</feature>
<feature type="strand" evidence="8">
    <location>
        <begin position="141"/>
        <end position="151"/>
    </location>
</feature>
<feature type="turn" evidence="8">
    <location>
        <begin position="153"/>
        <end position="155"/>
    </location>
</feature>
<feature type="strand" evidence="8">
    <location>
        <begin position="156"/>
        <end position="165"/>
    </location>
</feature>
<feature type="strand" evidence="7">
    <location>
        <begin position="166"/>
        <end position="168"/>
    </location>
</feature>
<feature type="strand" evidence="8">
    <location>
        <begin position="171"/>
        <end position="176"/>
    </location>
</feature>
<feature type="turn" evidence="8">
    <location>
        <begin position="178"/>
        <end position="180"/>
    </location>
</feature>
<feature type="strand" evidence="8">
    <location>
        <begin position="182"/>
        <end position="189"/>
    </location>
</feature>
<feature type="strand" evidence="8">
    <location>
        <begin position="193"/>
        <end position="203"/>
    </location>
</feature>
<feature type="strand" evidence="8">
    <location>
        <begin position="205"/>
        <end position="207"/>
    </location>
</feature>
<feature type="strand" evidence="8">
    <location>
        <begin position="209"/>
        <end position="212"/>
    </location>
</feature>
<feature type="strand" evidence="8">
    <location>
        <begin position="216"/>
        <end position="223"/>
    </location>
</feature>
<proteinExistence type="evidence at protein level"/>